<accession>Q9V460</accession>
<accession>Q8IGQ1</accession>
<accession>Q8T0P5</accession>
<dbReference type="EMBL" id="AF222864">
    <property type="protein sequence ID" value="AAF34689.1"/>
    <property type="molecule type" value="mRNA"/>
</dbReference>
<dbReference type="EMBL" id="AE013599">
    <property type="protein sequence ID" value="AAF57561.1"/>
    <property type="molecule type" value="Genomic_DNA"/>
</dbReference>
<dbReference type="EMBL" id="AY069140">
    <property type="protein sequence ID" value="AAL39285.1"/>
    <property type="status" value="ALT_SEQ"/>
    <property type="molecule type" value="mRNA"/>
</dbReference>
<dbReference type="EMBL" id="BT001668">
    <property type="protein sequence ID" value="AAN71423.1"/>
    <property type="molecule type" value="mRNA"/>
</dbReference>
<dbReference type="EMBL" id="BT023840">
    <property type="protein sequence ID" value="AAZ86761.1"/>
    <property type="molecule type" value="mRNA"/>
</dbReference>
<dbReference type="RefSeq" id="NP_652610.1">
    <molecule id="Q9V460-1"/>
    <property type="nucleotide sequence ID" value="NM_144353.4"/>
</dbReference>
<dbReference type="SMR" id="Q9V460"/>
<dbReference type="BioGRID" id="72729">
    <property type="interactions" value="22"/>
</dbReference>
<dbReference type="ComplexPortal" id="CPX-2429">
    <property type="entry name" value="DSIF transcription elongation complex"/>
</dbReference>
<dbReference type="DIP" id="DIP-59538N"/>
<dbReference type="FunCoup" id="Q9V460">
    <property type="interactions" value="2282"/>
</dbReference>
<dbReference type="IntAct" id="Q9V460">
    <property type="interactions" value="7"/>
</dbReference>
<dbReference type="STRING" id="7227.FBpp0085716"/>
<dbReference type="GlyGen" id="Q9V460">
    <property type="glycosylation" value="1 site"/>
</dbReference>
<dbReference type="iPTMnet" id="Q9V460"/>
<dbReference type="PaxDb" id="7227-FBpp0085716"/>
<dbReference type="DNASU" id="53442"/>
<dbReference type="EnsemblMetazoa" id="FBtr0086531">
    <molecule id="Q9V460-1"/>
    <property type="protein sequence ID" value="FBpp0085716"/>
    <property type="gene ID" value="FBgn0040273"/>
</dbReference>
<dbReference type="GeneID" id="53442"/>
<dbReference type="KEGG" id="dme:Dmel_CG7626"/>
<dbReference type="UCSC" id="CG7626-RA">
    <molecule id="Q9V460-1"/>
    <property type="organism name" value="d. melanogaster"/>
</dbReference>
<dbReference type="AGR" id="FB:FBgn0040273"/>
<dbReference type="CTD" id="53442"/>
<dbReference type="FlyBase" id="FBgn0040273">
    <property type="gene designation" value="Spt5"/>
</dbReference>
<dbReference type="VEuPathDB" id="VectorBase:FBgn0040273"/>
<dbReference type="eggNOG" id="KOG1999">
    <property type="taxonomic scope" value="Eukaryota"/>
</dbReference>
<dbReference type="GeneTree" id="ENSGT00440000037640"/>
<dbReference type="HOGENOM" id="CLU_003537_0_0_1"/>
<dbReference type="InParanoid" id="Q9V460"/>
<dbReference type="OMA" id="YPVGYMN"/>
<dbReference type="OrthoDB" id="28901at2759"/>
<dbReference type="PhylomeDB" id="Q9V460"/>
<dbReference type="Reactome" id="R-DME-112382">
    <property type="pathway name" value="Formation of RNA Pol II elongation complex"/>
</dbReference>
<dbReference type="Reactome" id="R-DME-113418">
    <property type="pathway name" value="Formation of the Early Elongation Complex"/>
</dbReference>
<dbReference type="Reactome" id="R-DME-674695">
    <property type="pathway name" value="RNA Polymerase II Pre-transcription Events"/>
</dbReference>
<dbReference type="Reactome" id="R-DME-6796648">
    <property type="pathway name" value="TP53 Regulates Transcription of DNA Repair Genes"/>
</dbReference>
<dbReference type="Reactome" id="R-DME-6807505">
    <property type="pathway name" value="RNA polymerase II transcribes snRNA genes"/>
</dbReference>
<dbReference type="Reactome" id="R-DME-72086">
    <property type="pathway name" value="mRNA Capping"/>
</dbReference>
<dbReference type="Reactome" id="R-DME-75955">
    <property type="pathway name" value="RNA Polymerase II Transcription Elongation"/>
</dbReference>
<dbReference type="Reactome" id="R-DME-77075">
    <property type="pathway name" value="RNA Pol II CTD phosphorylation and interaction with CE"/>
</dbReference>
<dbReference type="BioGRID-ORCS" id="53442">
    <property type="hits" value="0 hits in 1 CRISPR screen"/>
</dbReference>
<dbReference type="GenomeRNAi" id="53442"/>
<dbReference type="PRO" id="PR:Q9V460"/>
<dbReference type="Proteomes" id="UP000000803">
    <property type="component" value="Chromosome 2R"/>
</dbReference>
<dbReference type="Bgee" id="FBgn0040273">
    <property type="expression patterns" value="Expressed in posterior terminal follicle cell in ovary and 227 other cell types or tissues"/>
</dbReference>
<dbReference type="GO" id="GO:0032044">
    <property type="term" value="C:DSIF complex"/>
    <property type="evidence" value="ECO:0000314"/>
    <property type="project" value="FlyBase"/>
</dbReference>
<dbReference type="GO" id="GO:0005700">
    <property type="term" value="C:polytene chromosome"/>
    <property type="evidence" value="ECO:0000314"/>
    <property type="project" value="FlyBase"/>
</dbReference>
<dbReference type="GO" id="GO:0005705">
    <property type="term" value="C:polytene chromosome interband"/>
    <property type="evidence" value="ECO:0000314"/>
    <property type="project" value="UniProtKB"/>
</dbReference>
<dbReference type="GO" id="GO:0005703">
    <property type="term" value="C:polytene chromosome puff"/>
    <property type="evidence" value="ECO:0000314"/>
    <property type="project" value="UniProtKB"/>
</dbReference>
<dbReference type="GO" id="GO:0008023">
    <property type="term" value="C:transcription elongation factor complex"/>
    <property type="evidence" value="ECO:0000353"/>
    <property type="project" value="UniProtKB"/>
</dbReference>
<dbReference type="GO" id="GO:0003682">
    <property type="term" value="F:chromatin binding"/>
    <property type="evidence" value="ECO:0000314"/>
    <property type="project" value="FlyBase"/>
</dbReference>
<dbReference type="GO" id="GO:0003729">
    <property type="term" value="F:mRNA binding"/>
    <property type="evidence" value="ECO:0000314"/>
    <property type="project" value="FlyBase"/>
</dbReference>
<dbReference type="GO" id="GO:0046982">
    <property type="term" value="F:protein heterodimerization activity"/>
    <property type="evidence" value="ECO:0000250"/>
    <property type="project" value="UniProtKB"/>
</dbReference>
<dbReference type="GO" id="GO:0044877">
    <property type="term" value="F:protein-containing complex binding"/>
    <property type="evidence" value="ECO:0000314"/>
    <property type="project" value="UniProtKB"/>
</dbReference>
<dbReference type="GO" id="GO:0000993">
    <property type="term" value="F:RNA polymerase II complex binding"/>
    <property type="evidence" value="ECO:0000314"/>
    <property type="project" value="UniProtKB"/>
</dbReference>
<dbReference type="GO" id="GO:0032785">
    <property type="term" value="P:negative regulation of DNA-templated transcription, elongation"/>
    <property type="evidence" value="ECO:0000314"/>
    <property type="project" value="UniProtKB"/>
</dbReference>
<dbReference type="GO" id="GO:0000122">
    <property type="term" value="P:negative regulation of transcription by RNA polymerase II"/>
    <property type="evidence" value="ECO:0000314"/>
    <property type="project" value="UniProtKB"/>
</dbReference>
<dbReference type="GO" id="GO:0032786">
    <property type="term" value="P:positive regulation of DNA-templated transcription, elongation"/>
    <property type="evidence" value="ECO:0000250"/>
    <property type="project" value="UniProtKB"/>
</dbReference>
<dbReference type="GO" id="GO:0045944">
    <property type="term" value="P:positive regulation of transcription by RNA polymerase II"/>
    <property type="evidence" value="ECO:0000315"/>
    <property type="project" value="UniProtKB"/>
</dbReference>
<dbReference type="GO" id="GO:0007549">
    <property type="term" value="P:sex-chromosome dosage compensation"/>
    <property type="evidence" value="ECO:0000315"/>
    <property type="project" value="FlyBase"/>
</dbReference>
<dbReference type="GO" id="GO:0006368">
    <property type="term" value="P:transcription elongation by RNA polymerase II"/>
    <property type="evidence" value="ECO:0000314"/>
    <property type="project" value="UniProtKB"/>
</dbReference>
<dbReference type="GO" id="GO:0140673">
    <property type="term" value="P:transcription elongation-coupled chromatin remodeling"/>
    <property type="evidence" value="ECO:0007669"/>
    <property type="project" value="InterPro"/>
</dbReference>
<dbReference type="CDD" id="cd06081">
    <property type="entry name" value="KOW_Spt5_1"/>
    <property type="match status" value="1"/>
</dbReference>
<dbReference type="CDD" id="cd06082">
    <property type="entry name" value="KOW_Spt5_2"/>
    <property type="match status" value="1"/>
</dbReference>
<dbReference type="CDD" id="cd06083">
    <property type="entry name" value="KOW_Spt5_3"/>
    <property type="match status" value="1"/>
</dbReference>
<dbReference type="CDD" id="cd06084">
    <property type="entry name" value="KOW_Spt5_4"/>
    <property type="match status" value="1"/>
</dbReference>
<dbReference type="CDD" id="cd06085">
    <property type="entry name" value="KOW_Spt5_5"/>
    <property type="match status" value="1"/>
</dbReference>
<dbReference type="CDD" id="cd06086">
    <property type="entry name" value="KOW_Spt5_6"/>
    <property type="match status" value="1"/>
</dbReference>
<dbReference type="CDD" id="cd09888">
    <property type="entry name" value="NGN_Euk"/>
    <property type="match status" value="1"/>
</dbReference>
<dbReference type="FunFam" id="2.30.30.30:FF:000013">
    <property type="entry name" value="Transcription elongation factor SPT5"/>
    <property type="match status" value="1"/>
</dbReference>
<dbReference type="FunFam" id="2.30.30.30:FF:000016">
    <property type="entry name" value="Transcription elongation factor SPT5"/>
    <property type="match status" value="1"/>
</dbReference>
<dbReference type="FunFam" id="2.30.30.30:FF:000017">
    <property type="entry name" value="Transcription elongation factor SPT5"/>
    <property type="match status" value="1"/>
</dbReference>
<dbReference type="FunFam" id="3.30.70.940:FF:000003">
    <property type="entry name" value="Transcription elongation factor SPT5"/>
    <property type="match status" value="1"/>
</dbReference>
<dbReference type="Gene3D" id="2.30.30.30">
    <property type="match status" value="3"/>
</dbReference>
<dbReference type="Gene3D" id="3.30.70.940">
    <property type="entry name" value="NusG, N-terminal domain"/>
    <property type="match status" value="1"/>
</dbReference>
<dbReference type="InterPro" id="IPR005824">
    <property type="entry name" value="KOW"/>
</dbReference>
<dbReference type="InterPro" id="IPR041973">
    <property type="entry name" value="KOW_Spt5_1"/>
</dbReference>
<dbReference type="InterPro" id="IPR041975">
    <property type="entry name" value="KOW_Spt5_2"/>
</dbReference>
<dbReference type="InterPro" id="IPR041976">
    <property type="entry name" value="KOW_Spt5_3"/>
</dbReference>
<dbReference type="InterPro" id="IPR041977">
    <property type="entry name" value="KOW_Spt5_4"/>
</dbReference>
<dbReference type="InterPro" id="IPR041978">
    <property type="entry name" value="KOW_Spt5_5"/>
</dbReference>
<dbReference type="InterPro" id="IPR041980">
    <property type="entry name" value="KOW_Spt5_6"/>
</dbReference>
<dbReference type="InterPro" id="IPR005100">
    <property type="entry name" value="NGN-domain"/>
</dbReference>
<dbReference type="InterPro" id="IPR006645">
    <property type="entry name" value="NGN-like_dom"/>
</dbReference>
<dbReference type="InterPro" id="IPR036735">
    <property type="entry name" value="NGN_dom_sf"/>
</dbReference>
<dbReference type="InterPro" id="IPR039385">
    <property type="entry name" value="NGN_Euk"/>
</dbReference>
<dbReference type="InterPro" id="IPR014722">
    <property type="entry name" value="Rib_uL2_dom2"/>
</dbReference>
<dbReference type="InterPro" id="IPR039659">
    <property type="entry name" value="SPT5"/>
</dbReference>
<dbReference type="InterPro" id="IPR024945">
    <property type="entry name" value="Spt5_C_dom"/>
</dbReference>
<dbReference type="InterPro" id="IPR022581">
    <property type="entry name" value="Spt5_N"/>
</dbReference>
<dbReference type="InterPro" id="IPR017071">
    <property type="entry name" value="TF_Spt5_eukaryote"/>
</dbReference>
<dbReference type="InterPro" id="IPR008991">
    <property type="entry name" value="Translation_prot_SH3-like_sf"/>
</dbReference>
<dbReference type="PANTHER" id="PTHR11125">
    <property type="entry name" value="SUPPRESSOR OF TY 5"/>
    <property type="match status" value="1"/>
</dbReference>
<dbReference type="PANTHER" id="PTHR11125:SF7">
    <property type="entry name" value="TRANSCRIPTION ELONGATION FACTOR SPT5"/>
    <property type="match status" value="1"/>
</dbReference>
<dbReference type="Pfam" id="PF00467">
    <property type="entry name" value="KOW"/>
    <property type="match status" value="1"/>
</dbReference>
<dbReference type="Pfam" id="PF23042">
    <property type="entry name" value="KOW1_SPT5"/>
    <property type="match status" value="1"/>
</dbReference>
<dbReference type="Pfam" id="PF23284">
    <property type="entry name" value="KOW2_Spt5"/>
    <property type="match status" value="1"/>
</dbReference>
<dbReference type="Pfam" id="PF23291">
    <property type="entry name" value="KOW4_SPT5"/>
    <property type="match status" value="1"/>
</dbReference>
<dbReference type="Pfam" id="PF23290">
    <property type="entry name" value="KOW5_SPT5"/>
    <property type="match status" value="1"/>
</dbReference>
<dbReference type="Pfam" id="PF23288">
    <property type="entry name" value="KOW6_SPT5"/>
    <property type="match status" value="1"/>
</dbReference>
<dbReference type="Pfam" id="PF23287">
    <property type="entry name" value="KOW7_SPT5"/>
    <property type="match status" value="1"/>
</dbReference>
<dbReference type="Pfam" id="PF23037">
    <property type="entry name" value="KOWx_SPT5"/>
    <property type="match status" value="1"/>
</dbReference>
<dbReference type="Pfam" id="PF03439">
    <property type="entry name" value="Spt5-NGN"/>
    <property type="match status" value="1"/>
</dbReference>
<dbReference type="Pfam" id="PF11942">
    <property type="entry name" value="Spt5_N"/>
    <property type="match status" value="1"/>
</dbReference>
<dbReference type="PIRSF" id="PIRSF036945">
    <property type="entry name" value="Spt5"/>
    <property type="match status" value="1"/>
</dbReference>
<dbReference type="SMART" id="SM01104">
    <property type="entry name" value="CTD"/>
    <property type="match status" value="1"/>
</dbReference>
<dbReference type="SMART" id="SM00739">
    <property type="entry name" value="KOW"/>
    <property type="match status" value="6"/>
</dbReference>
<dbReference type="SMART" id="SM00738">
    <property type="entry name" value="NGN"/>
    <property type="match status" value="1"/>
</dbReference>
<dbReference type="SUPFAM" id="SSF50104">
    <property type="entry name" value="Translation proteins SH3-like domain"/>
    <property type="match status" value="1"/>
</dbReference>
<comment type="function">
    <text evidence="4 8 9">Component of the DRB sensitivity-inducing factor complex (DSIF complex), which regulates transcription elongation by RNA polymerase II. DSIF enhances transcriptional pausing at sites proximal to the promoter, which may facilitate the assembly of an elongation competent RNA polymerase II complex. DSIF may also promote transcriptional elongation within coding regions. DSIF is required for the transcriptional induction of heat shock response genes and regulation of genes which control anterior-posterior patterning during embryonic development.</text>
</comment>
<comment type="subunit">
    <text evidence="3 5 6 7">Interacts with Spt6. Interacts with Spt4 to form DSIF. DSIF interacts with trx, RNA polymerase II and with the FACT complex, which is composed of dre4/Spt16 and Ssrp/Ssrp1. DSIF can also interact with the exosome, a complex with 3'-5' exoribonuclease activity which is composed of at least Csl4, Dis3, Mtr3, Rrp4, Rrp6, Rrp40, Rrp42, Rrp46 and Ski6. DSIF may also interact with the positive transcription elongation factor b complex (P-TEFb complex), which is composed of Cdk9 and cyclin-T (CycT).</text>
</comment>
<comment type="interaction">
    <interactant intactId="EBI-134850">
        <id>Q9V460</id>
    </interactant>
    <interactant intactId="EBI-165626">
        <id>Q9TVQ5</id>
        <label>spt4</label>
    </interactant>
    <organismsDiffer>false</organismsDiffer>
    <experiments>3</experiments>
</comment>
<comment type="subcellular location">
    <subcellularLocation>
        <location>Nucleus</location>
    </subcellularLocation>
    <subcellularLocation>
        <location>Chromosome</location>
    </subcellularLocation>
    <text>Localizes predominantly to transcriptionally active regions of polytene chromosomes.</text>
</comment>
<comment type="alternative products">
    <event type="alternative splicing"/>
    <isoform>
        <id>Q9V460-1</id>
        <name>A</name>
        <sequence type="displayed"/>
    </isoform>
    <isoform>
        <id>Q9V460-2</id>
        <name>B</name>
        <sequence type="described" ref="VSP_016285"/>
    </isoform>
</comment>
<comment type="PTM">
    <text evidence="1">Phosphorylated. Phosphorylation by P-TEFb alleviates transcriptional pausing (By similarity).</text>
</comment>
<comment type="PTM">
    <text evidence="12">Phosphorylation by P-TEFb alleviates transcriptional pausing (PubMed:32966759). Dephosphorylated by the INTAC complex when transcripts are unfavorably configured for transcriptional elongation, leading to premature transcription termination: dephosphorylation is mediated by the mts/PP2A component of the INTAC complex (PubMed:32966759).</text>
</comment>
<comment type="similarity">
    <text evidence="14">Belongs to the SPT5 family.</text>
</comment>
<comment type="sequence caution" evidence="14">
    <conflict type="erroneous initiation">
        <sequence resource="EMBL-CDS" id="AAL39285"/>
    </conflict>
    <text>Truncated N-terminus.</text>
</comment>
<comment type="sequence caution" evidence="14">
    <conflict type="frameshift">
        <sequence resource="EMBL-CDS" id="AAL39285"/>
    </conflict>
</comment>
<organism>
    <name type="scientific">Drosophila melanogaster</name>
    <name type="common">Fruit fly</name>
    <dbReference type="NCBI Taxonomy" id="7227"/>
    <lineage>
        <taxon>Eukaryota</taxon>
        <taxon>Metazoa</taxon>
        <taxon>Ecdysozoa</taxon>
        <taxon>Arthropoda</taxon>
        <taxon>Hexapoda</taxon>
        <taxon>Insecta</taxon>
        <taxon>Pterygota</taxon>
        <taxon>Neoptera</taxon>
        <taxon>Endopterygota</taxon>
        <taxon>Diptera</taxon>
        <taxon>Brachycera</taxon>
        <taxon>Muscomorpha</taxon>
        <taxon>Ephydroidea</taxon>
        <taxon>Drosophilidae</taxon>
        <taxon>Drosophila</taxon>
        <taxon>Sophophora</taxon>
    </lineage>
</organism>
<proteinExistence type="evidence at protein level"/>
<gene>
    <name type="primary">Spt5</name>
    <name type="ORF">CG7626</name>
</gene>
<sequence>MSDSEVSNMSDSGSEDGSISNKSQRSARSKSRSRSRSGSRGSRSVSRSRSRSQSGHSRSGSESPQRRDNRGKSDESGEEEEEPPGEDIDSEEYDEEENDDHPRKKKKKERFGGFIIDEAEVDDEVDEDDEWEEGANEIGIVGNEIDELGPTARDIEIRRRGTNLWDTQKEDEIEEYLRKKYADESIAKRHFGDGGEEMSDEITQQTLLPGIKDPNLWMVKCRIGEEKATALLLMRKYLTYLNTDDPLQIKSIIAPEGVKGYIYLEAYKQTHVKTCIDNVGNLRMGKWKQEMVPIKEMTDVLKVVKEQVGLKVKQWVRLKRGLYKDDIAQVDYVDLAQNQVHLKLLPRIDYTRMRGALRTTATESDDSKRKKKRRPAAKPFDPEAVRAIGGEVHSDGDFLLFEGNRYSRKGFLYKNFTMSAILSDGVKPTLAELERFEESPEEVNLEIMGTVKDDPTMAHSFSMGDNVEVCVGDLENLQAKIVAIDGTMITVMPKHQDLKDPLIFKASELRKYFKTGDHARVLAGRYEGETGLIIRVEPTRVVLVSDLTNHELEVLPRDLQLCSDVATGVDCLGQFQWGDMVQLDSQNVGVIVRLERENFHVLGMNGKCIECKPTALHKRKENRHTVALDADQNQIRRRDVVKVMEGPHAGRSGEIKHLYRSLAFLHCRMYTENGGIFVCKTRHLQLAGGSKTTVSNAGIVGGLGFMSPRIQSPMHPSGGRGARGGARGGRGGFRVTRDREILGKTIKISGGPYKGAVGIVKDATESTARVELHTSCQTISVDRNHIAIVGVTGKEGSVSTYGRTPARTPGYGAQTPSYTAAGSKTPLVGSQTPNWDTDTRTPYGTMTPSHDGSMTPRHGAWDPTANTTPARNNDFDYSLEEPSPSPGYNPSTPGYQMTSQFAPQTPGTLYGSDRSYSPFNPSPSPAPSPYPVGYMNTPSPSTYSPNTPGGIPQSPYNPQTPGASLDSSMGDWCTTDIEVRIHTHDDTDLVGQTGIIRTVSNGVCSVFLRQEDRSVSIVSEHLAPVLPCNGDEFKIIYGDDRESVGRVLSKDGDVFVCRINEEIKLLPINFLCKMKSID</sequence>
<feature type="chain" id="PRO_0000208473" description="Transcription elongation factor SPT5">
    <location>
        <begin position="1"/>
        <end position="1078"/>
    </location>
</feature>
<feature type="domain" description="KOW 1">
    <location>
        <begin position="309"/>
        <end position="336"/>
    </location>
</feature>
<feature type="domain" description="KOW 2">
    <location>
        <begin position="460"/>
        <end position="487"/>
    </location>
</feature>
<feature type="domain" description="KOW 3">
    <location>
        <begin position="513"/>
        <end position="545"/>
    </location>
</feature>
<feature type="domain" description="KOW 4">
    <location>
        <begin position="635"/>
        <end position="668"/>
    </location>
</feature>
<feature type="domain" description="KOW 5">
    <location>
        <begin position="740"/>
        <end position="773"/>
    </location>
</feature>
<feature type="region of interest" description="Disordered" evidence="2">
    <location>
        <begin position="1"/>
        <end position="111"/>
    </location>
</feature>
<feature type="region of interest" description="Disordered" evidence="2">
    <location>
        <begin position="117"/>
        <end position="136"/>
    </location>
</feature>
<feature type="region of interest" description="Interaction with Spt4" evidence="1">
    <location>
        <begin position="213"/>
        <end position="307"/>
    </location>
</feature>
<feature type="region of interest" description="Interaction with RNA polymerase II" evidence="1">
    <location>
        <begin position="350"/>
        <end position="461"/>
    </location>
</feature>
<feature type="region of interest" description="Disordered" evidence="2">
    <location>
        <begin position="359"/>
        <end position="379"/>
    </location>
</feature>
<feature type="region of interest" description="Disordered" evidence="2">
    <location>
        <begin position="714"/>
        <end position="733"/>
    </location>
</feature>
<feature type="region of interest" description="Disordered" evidence="2">
    <location>
        <begin position="796"/>
        <end position="969"/>
    </location>
</feature>
<feature type="compositionally biased region" description="Polar residues" evidence="2">
    <location>
        <begin position="1"/>
        <end position="22"/>
    </location>
</feature>
<feature type="compositionally biased region" description="Basic residues" evidence="2">
    <location>
        <begin position="25"/>
        <end position="37"/>
    </location>
</feature>
<feature type="compositionally biased region" description="Low complexity" evidence="2">
    <location>
        <begin position="38"/>
        <end position="63"/>
    </location>
</feature>
<feature type="compositionally biased region" description="Basic and acidic residues" evidence="2">
    <location>
        <begin position="64"/>
        <end position="75"/>
    </location>
</feature>
<feature type="compositionally biased region" description="Acidic residues" evidence="2">
    <location>
        <begin position="76"/>
        <end position="99"/>
    </location>
</feature>
<feature type="compositionally biased region" description="Acidic residues" evidence="2">
    <location>
        <begin position="117"/>
        <end position="135"/>
    </location>
</feature>
<feature type="compositionally biased region" description="Gly residues" evidence="2">
    <location>
        <begin position="718"/>
        <end position="732"/>
    </location>
</feature>
<feature type="compositionally biased region" description="Polar residues" evidence="2">
    <location>
        <begin position="814"/>
        <end position="852"/>
    </location>
</feature>
<feature type="compositionally biased region" description="Polar residues" evidence="2">
    <location>
        <begin position="886"/>
        <end position="907"/>
    </location>
</feature>
<feature type="compositionally biased region" description="Pro residues" evidence="2">
    <location>
        <begin position="920"/>
        <end position="930"/>
    </location>
</feature>
<feature type="compositionally biased region" description="Low complexity" evidence="2">
    <location>
        <begin position="936"/>
        <end position="948"/>
    </location>
</feature>
<feature type="compositionally biased region" description="Polar residues" evidence="2">
    <location>
        <begin position="954"/>
        <end position="967"/>
    </location>
</feature>
<feature type="modified residue" description="Phosphoserine" evidence="11">
    <location>
        <position position="73"/>
    </location>
</feature>
<feature type="modified residue" description="Phosphoserine" evidence="11">
    <location>
        <position position="76"/>
    </location>
</feature>
<feature type="modified residue" description="Phosphoserine" evidence="11">
    <location>
        <position position="90"/>
    </location>
</feature>
<feature type="modified residue" description="Phosphothreonine" evidence="11">
    <location>
        <position position="162"/>
    </location>
</feature>
<feature type="modified residue" description="Phosphoserine" evidence="10">
    <location>
        <position position="707"/>
    </location>
</feature>
<feature type="modified residue" description="Phosphothreonine" evidence="11">
    <location>
        <position position="808"/>
    </location>
</feature>
<feature type="modified residue" description="Phosphothreonine; by CDK9" evidence="1">
    <location>
        <position position="815"/>
    </location>
</feature>
<feature type="modified residue" description="Phosphothreonine; by CDK9" evidence="1">
    <location>
        <position position="825"/>
    </location>
</feature>
<feature type="modified residue" description="Phosphothreonine" evidence="11">
    <location>
        <position position="847"/>
    </location>
</feature>
<feature type="modified residue" description="Phosphothreonine" evidence="11">
    <location>
        <position position="855"/>
    </location>
</feature>
<feature type="modified residue" description="Phosphothreonine" evidence="11">
    <location>
        <position position="867"/>
    </location>
</feature>
<feature type="modified residue" description="Phosphothreonine" evidence="11">
    <location>
        <position position="868"/>
    </location>
</feature>
<feature type="splice variant" id="VSP_016285" description="In isoform B." evidence="13">
    <location>
        <begin position="488"/>
        <end position="603"/>
    </location>
</feature>
<feature type="mutagenesis site" description="In allele WO49; impedes segmental patterning of the embryo and the heat shock response." evidence="8">
    <original>G</original>
    <variation>D</variation>
    <location>
        <position position="994"/>
    </location>
</feature>
<protein>
    <recommendedName>
        <fullName>Transcription elongation factor SPT5</fullName>
    </recommendedName>
    <alternativeName>
        <fullName>DRB sensitivity-inducing factor large subunit</fullName>
        <shortName>DSIF large subunit</shortName>
    </alternativeName>
    <alternativeName>
        <fullName>dSpt5</fullName>
    </alternativeName>
</protein>
<evidence type="ECO:0000250" key="1"/>
<evidence type="ECO:0000256" key="2">
    <source>
        <dbReference type="SAM" id="MobiDB-lite"/>
    </source>
</evidence>
<evidence type="ECO:0000269" key="3">
    <source>
    </source>
</evidence>
<evidence type="ECO:0000269" key="4">
    <source>
    </source>
</evidence>
<evidence type="ECO:0000269" key="5">
    <source>
    </source>
</evidence>
<evidence type="ECO:0000269" key="6">
    <source>
    </source>
</evidence>
<evidence type="ECO:0000269" key="7">
    <source>
    </source>
</evidence>
<evidence type="ECO:0000269" key="8">
    <source>
    </source>
</evidence>
<evidence type="ECO:0000269" key="9">
    <source>
    </source>
</evidence>
<evidence type="ECO:0000269" key="10">
    <source>
    </source>
</evidence>
<evidence type="ECO:0000269" key="11">
    <source>
    </source>
</evidence>
<evidence type="ECO:0000269" key="12">
    <source>
    </source>
</evidence>
<evidence type="ECO:0000303" key="13">
    <source>
    </source>
</evidence>
<evidence type="ECO:0000305" key="14"/>
<keyword id="KW-0010">Activator</keyword>
<keyword id="KW-0025">Alternative splicing</keyword>
<keyword id="KW-0158">Chromosome</keyword>
<keyword id="KW-0539">Nucleus</keyword>
<keyword id="KW-0597">Phosphoprotein</keyword>
<keyword id="KW-1185">Reference proteome</keyword>
<keyword id="KW-0677">Repeat</keyword>
<keyword id="KW-0678">Repressor</keyword>
<keyword id="KW-0804">Transcription</keyword>
<keyword id="KW-0805">Transcription regulation</keyword>
<reference key="1">
    <citation type="journal article" date="2000" name="Genes Dev.">
        <title>Spt5 and spt6 are associated with active transcription and have characteristics of general elongation factors in D. melanogaster.</title>
        <authorList>
            <person name="Kaplan C.D."/>
            <person name="Morris J.R."/>
            <person name="Wu C.-T."/>
            <person name="Winston F."/>
        </authorList>
    </citation>
    <scope>NUCLEOTIDE SEQUENCE [MRNA] (ISOFORM A)</scope>
    <scope>SUBCELLULAR LOCATION</scope>
</reference>
<reference key="2">
    <citation type="journal article" date="2000" name="Science">
        <title>The genome sequence of Drosophila melanogaster.</title>
        <authorList>
            <person name="Adams M.D."/>
            <person name="Celniker S.E."/>
            <person name="Holt R.A."/>
            <person name="Evans C.A."/>
            <person name="Gocayne J.D."/>
            <person name="Amanatides P.G."/>
            <person name="Scherer S.E."/>
            <person name="Li P.W."/>
            <person name="Hoskins R.A."/>
            <person name="Galle R.F."/>
            <person name="George R.A."/>
            <person name="Lewis S.E."/>
            <person name="Richards S."/>
            <person name="Ashburner M."/>
            <person name="Henderson S.N."/>
            <person name="Sutton G.G."/>
            <person name="Wortman J.R."/>
            <person name="Yandell M.D."/>
            <person name="Zhang Q."/>
            <person name="Chen L.X."/>
            <person name="Brandon R.C."/>
            <person name="Rogers Y.-H.C."/>
            <person name="Blazej R.G."/>
            <person name="Champe M."/>
            <person name="Pfeiffer B.D."/>
            <person name="Wan K.H."/>
            <person name="Doyle C."/>
            <person name="Baxter E.G."/>
            <person name="Helt G."/>
            <person name="Nelson C.R."/>
            <person name="Miklos G.L.G."/>
            <person name="Abril J.F."/>
            <person name="Agbayani A."/>
            <person name="An H.-J."/>
            <person name="Andrews-Pfannkoch C."/>
            <person name="Baldwin D."/>
            <person name="Ballew R.M."/>
            <person name="Basu A."/>
            <person name="Baxendale J."/>
            <person name="Bayraktaroglu L."/>
            <person name="Beasley E.M."/>
            <person name="Beeson K.Y."/>
            <person name="Benos P.V."/>
            <person name="Berman B.P."/>
            <person name="Bhandari D."/>
            <person name="Bolshakov S."/>
            <person name="Borkova D."/>
            <person name="Botchan M.R."/>
            <person name="Bouck J."/>
            <person name="Brokstein P."/>
            <person name="Brottier P."/>
            <person name="Burtis K.C."/>
            <person name="Busam D.A."/>
            <person name="Butler H."/>
            <person name="Cadieu E."/>
            <person name="Center A."/>
            <person name="Chandra I."/>
            <person name="Cherry J.M."/>
            <person name="Cawley S."/>
            <person name="Dahlke C."/>
            <person name="Davenport L.B."/>
            <person name="Davies P."/>
            <person name="de Pablos B."/>
            <person name="Delcher A."/>
            <person name="Deng Z."/>
            <person name="Mays A.D."/>
            <person name="Dew I."/>
            <person name="Dietz S.M."/>
            <person name="Dodson K."/>
            <person name="Doup L.E."/>
            <person name="Downes M."/>
            <person name="Dugan-Rocha S."/>
            <person name="Dunkov B.C."/>
            <person name="Dunn P."/>
            <person name="Durbin K.J."/>
            <person name="Evangelista C.C."/>
            <person name="Ferraz C."/>
            <person name="Ferriera S."/>
            <person name="Fleischmann W."/>
            <person name="Fosler C."/>
            <person name="Gabrielian A.E."/>
            <person name="Garg N.S."/>
            <person name="Gelbart W.M."/>
            <person name="Glasser K."/>
            <person name="Glodek A."/>
            <person name="Gong F."/>
            <person name="Gorrell J.H."/>
            <person name="Gu Z."/>
            <person name="Guan P."/>
            <person name="Harris M."/>
            <person name="Harris N.L."/>
            <person name="Harvey D.A."/>
            <person name="Heiman T.J."/>
            <person name="Hernandez J.R."/>
            <person name="Houck J."/>
            <person name="Hostin D."/>
            <person name="Houston K.A."/>
            <person name="Howland T.J."/>
            <person name="Wei M.-H."/>
            <person name="Ibegwam C."/>
            <person name="Jalali M."/>
            <person name="Kalush F."/>
            <person name="Karpen G.H."/>
            <person name="Ke Z."/>
            <person name="Kennison J.A."/>
            <person name="Ketchum K.A."/>
            <person name="Kimmel B.E."/>
            <person name="Kodira C.D."/>
            <person name="Kraft C.L."/>
            <person name="Kravitz S."/>
            <person name="Kulp D."/>
            <person name="Lai Z."/>
            <person name="Lasko P."/>
            <person name="Lei Y."/>
            <person name="Levitsky A.A."/>
            <person name="Li J.H."/>
            <person name="Li Z."/>
            <person name="Liang Y."/>
            <person name="Lin X."/>
            <person name="Liu X."/>
            <person name="Mattei B."/>
            <person name="McIntosh T.C."/>
            <person name="McLeod M.P."/>
            <person name="McPherson D."/>
            <person name="Merkulov G."/>
            <person name="Milshina N.V."/>
            <person name="Mobarry C."/>
            <person name="Morris J."/>
            <person name="Moshrefi A."/>
            <person name="Mount S.M."/>
            <person name="Moy M."/>
            <person name="Murphy B."/>
            <person name="Murphy L."/>
            <person name="Muzny D.M."/>
            <person name="Nelson D.L."/>
            <person name="Nelson D.R."/>
            <person name="Nelson K.A."/>
            <person name="Nixon K."/>
            <person name="Nusskern D.R."/>
            <person name="Pacleb J.M."/>
            <person name="Palazzolo M."/>
            <person name="Pittman G.S."/>
            <person name="Pan S."/>
            <person name="Pollard J."/>
            <person name="Puri V."/>
            <person name="Reese M.G."/>
            <person name="Reinert K."/>
            <person name="Remington K."/>
            <person name="Saunders R.D.C."/>
            <person name="Scheeler F."/>
            <person name="Shen H."/>
            <person name="Shue B.C."/>
            <person name="Siden-Kiamos I."/>
            <person name="Simpson M."/>
            <person name="Skupski M.P."/>
            <person name="Smith T.J."/>
            <person name="Spier E."/>
            <person name="Spradling A.C."/>
            <person name="Stapleton M."/>
            <person name="Strong R."/>
            <person name="Sun E."/>
            <person name="Svirskas R."/>
            <person name="Tector C."/>
            <person name="Turner R."/>
            <person name="Venter E."/>
            <person name="Wang A.H."/>
            <person name="Wang X."/>
            <person name="Wang Z.-Y."/>
            <person name="Wassarman D.A."/>
            <person name="Weinstock G.M."/>
            <person name="Weissenbach J."/>
            <person name="Williams S.M."/>
            <person name="Woodage T."/>
            <person name="Worley K.C."/>
            <person name="Wu D."/>
            <person name="Yang S."/>
            <person name="Yao Q.A."/>
            <person name="Ye J."/>
            <person name="Yeh R.-F."/>
            <person name="Zaveri J.S."/>
            <person name="Zhan M."/>
            <person name="Zhang G."/>
            <person name="Zhao Q."/>
            <person name="Zheng L."/>
            <person name="Zheng X.H."/>
            <person name="Zhong F.N."/>
            <person name="Zhong W."/>
            <person name="Zhou X."/>
            <person name="Zhu S.C."/>
            <person name="Zhu X."/>
            <person name="Smith H.O."/>
            <person name="Gibbs R.A."/>
            <person name="Myers E.W."/>
            <person name="Rubin G.M."/>
            <person name="Venter J.C."/>
        </authorList>
    </citation>
    <scope>NUCLEOTIDE SEQUENCE [LARGE SCALE GENOMIC DNA]</scope>
    <source>
        <strain>Berkeley</strain>
    </source>
</reference>
<reference key="3">
    <citation type="journal article" date="2002" name="Genome Biol.">
        <title>Annotation of the Drosophila melanogaster euchromatic genome: a systematic review.</title>
        <authorList>
            <person name="Misra S."/>
            <person name="Crosby M.A."/>
            <person name="Mungall C.J."/>
            <person name="Matthews B.B."/>
            <person name="Campbell K.S."/>
            <person name="Hradecky P."/>
            <person name="Huang Y."/>
            <person name="Kaminker J.S."/>
            <person name="Millburn G.H."/>
            <person name="Prochnik S.E."/>
            <person name="Smith C.D."/>
            <person name="Tupy J.L."/>
            <person name="Whitfield E.J."/>
            <person name="Bayraktaroglu L."/>
            <person name="Berman B.P."/>
            <person name="Bettencourt B.R."/>
            <person name="Celniker S.E."/>
            <person name="de Grey A.D.N.J."/>
            <person name="Drysdale R.A."/>
            <person name="Harris N.L."/>
            <person name="Richter J."/>
            <person name="Russo S."/>
            <person name="Schroeder A.J."/>
            <person name="Shu S.Q."/>
            <person name="Stapleton M."/>
            <person name="Yamada C."/>
            <person name="Ashburner M."/>
            <person name="Gelbart W.M."/>
            <person name="Rubin G.M."/>
            <person name="Lewis S.E."/>
        </authorList>
    </citation>
    <scope>GENOME REANNOTATION</scope>
    <source>
        <strain>Berkeley</strain>
    </source>
</reference>
<reference key="4">
    <citation type="journal article" date="2002" name="Genome Biol.">
        <title>A Drosophila full-length cDNA resource.</title>
        <authorList>
            <person name="Stapleton M."/>
            <person name="Carlson J.W."/>
            <person name="Brokstein P."/>
            <person name="Yu C."/>
            <person name="Champe M."/>
            <person name="George R.A."/>
            <person name="Guarin H."/>
            <person name="Kronmiller B."/>
            <person name="Pacleb J.M."/>
            <person name="Park S."/>
            <person name="Wan K.H."/>
            <person name="Rubin G.M."/>
            <person name="Celniker S.E."/>
        </authorList>
    </citation>
    <scope>NUCLEOTIDE SEQUENCE [LARGE SCALE MRNA] (ISOFORM B)</scope>
    <scope>NUCLEOTIDE SEQUENCE [LARGE SCALE MRNA] OF 408-1078 (ISOFORM A)</scope>
    <source>
        <strain>Berkeley</strain>
        <tissue>Embryo</tissue>
        <tissue>Head</tissue>
    </source>
</reference>
<reference key="5">
    <citation type="submission" date="2005-08" db="EMBL/GenBank/DDBJ databases">
        <authorList>
            <person name="Stapleton M."/>
            <person name="Carlson J.W."/>
            <person name="Chavez C."/>
            <person name="Frise E."/>
            <person name="George R.A."/>
            <person name="Pacleb J.M."/>
            <person name="Park S."/>
            <person name="Wan K.H."/>
            <person name="Yu C."/>
            <person name="Celniker S.E."/>
        </authorList>
    </citation>
    <scope>NUCLEOTIDE SEQUENCE [LARGE SCALE MRNA] (ISOFORM A)</scope>
    <source>
        <strain>Berkeley</strain>
        <tissue>Embryo</tissue>
    </source>
</reference>
<reference key="6">
    <citation type="journal article" date="2000" name="Genes Dev.">
        <title>High-resolution localization of Drosophila Spt5 and Spt6 at heat shock genes in vivo: roles in promoter proximal pausing and transcription elongation.</title>
        <authorList>
            <person name="Andrulis E.D."/>
            <person name="Guzman E."/>
            <person name="Doering P."/>
            <person name="Werner J."/>
            <person name="Lis J.T."/>
        </authorList>
    </citation>
    <scope>SUBCELLULAR LOCATION</scope>
</reference>
<reference key="7">
    <citation type="journal article" date="2002" name="Nature">
        <title>The RNA processing exosome is linked to elongating RNA polymerase II in Drosophila.</title>
        <authorList>
            <person name="Andrulis E.D."/>
            <person name="Werner J."/>
            <person name="Nazarian A."/>
            <person name="Erdjument-Bromage H."/>
            <person name="Tempst P."/>
            <person name="Lis J.T."/>
        </authorList>
    </citation>
    <scope>INTERACTION WITH THE EXOSOME COMPLEX</scope>
</reference>
<reference key="8">
    <citation type="journal article" date="2003" name="Genes Dev.">
        <title>NELF and DSIF cause promoter proximal pausing on the hsp70 promoter in Drosophila.</title>
        <authorList>
            <person name="Wu C.-H."/>
            <person name="Yamaguchi Y."/>
            <person name="Benjamin L.R."/>
            <person name="Horvat-Gordon M."/>
            <person name="Washinsky J."/>
            <person name="Enerly E."/>
            <person name="Larsson J."/>
            <person name="Lambertsson A."/>
            <person name="Handa H."/>
            <person name="Gilmour D."/>
        </authorList>
    </citation>
    <scope>FUNCTION</scope>
    <scope>SUBCELLULAR LOCATION</scope>
</reference>
<reference key="9">
    <citation type="journal article" date="2003" name="Science">
        <title>Tracking FACT and the RNA polymerase II elongation complex through chromatin in vivo.</title>
        <authorList>
            <person name="Saunders A."/>
            <person name="Werner J."/>
            <person name="Andrulis E.D."/>
            <person name="Nakayama T."/>
            <person name="Hirose S."/>
            <person name="Reinberg D."/>
            <person name="Lis J.T."/>
        </authorList>
    </citation>
    <scope>INTERACTION WITH SPT6; RNA POLYMERASE II AND THE FACT COMPLEX</scope>
    <scope>SUBCELLULAR LOCATION</scope>
</reference>
<reference key="10">
    <citation type="journal article" date="2004" name="Curr. Biol.">
        <title>Locus-specific requirements for Spt5 in transcriptional activation and repression in Drosophila.</title>
        <authorList>
            <person name="Jennings B.H."/>
            <person name="Shah S."/>
            <person name="Yamaguchi Y."/>
            <person name="Seki M."/>
            <person name="Phillips R.G."/>
            <person name="Handa H."/>
            <person name="Ish-Horowicz D."/>
        </authorList>
    </citation>
    <scope>FUNCTION</scope>
    <scope>MUTAGENESIS OF GLY-994</scope>
</reference>
<reference key="11">
    <citation type="journal article" date="2004" name="J. Biol. Chem.">
        <title>Analysis of polymerase II elongation complexes by native gel electrophoresis. Evidence for a novel carboxyl-terminal domain-mediated termination mechanism.</title>
        <authorList>
            <person name="Zhang Z."/>
            <person name="Wu C.-H."/>
            <person name="Gilmour D.S."/>
        </authorList>
    </citation>
    <scope>INTERACTION WITH SPT4 AND RNA POLYMERASE II</scope>
</reference>
<reference key="12">
    <citation type="journal article" date="2004" name="Nat. Cell Biol.">
        <title>Modulation of heat shock gene expression by the TAC1 chromatin-modifying complex.</title>
        <authorList>
            <person name="Smith S.T."/>
            <person name="Petruk S."/>
            <person name="Sedkov Y."/>
            <person name="Cho E."/>
            <person name="Tillib S."/>
            <person name="Canaani E."/>
            <person name="Mazo A."/>
        </authorList>
    </citation>
    <scope>INTERACTION WITH TRX</scope>
    <scope>SUBCELLULAR LOCATION</scope>
</reference>
<reference key="13">
    <citation type="journal article" date="2005" name="Nucleic Acids Res.">
        <title>Molecular characterization of Drosophila NELF.</title>
        <authorList>
            <person name="Wu C.-H."/>
            <person name="Lee C."/>
            <person name="Fan R."/>
            <person name="Smith M.J."/>
            <person name="Yamaguchi Y."/>
            <person name="Handa H."/>
            <person name="Gilmour D.S."/>
        </authorList>
    </citation>
    <scope>FUNCTION</scope>
</reference>
<reference key="14">
    <citation type="journal article" date="2007" name="Mol. Biosyst.">
        <title>An integrated chemical, mass spectrometric and computational strategy for (quantitative) phosphoproteomics: application to Drosophila melanogaster Kc167 cells.</title>
        <authorList>
            <person name="Bodenmiller B."/>
            <person name="Mueller L.N."/>
            <person name="Pedrioli P.G.A."/>
            <person name="Pflieger D."/>
            <person name="Juenger M.A."/>
            <person name="Eng J.K."/>
            <person name="Aebersold R."/>
            <person name="Tao W.A."/>
        </authorList>
    </citation>
    <scope>PHOSPHORYLATION [LARGE SCALE ANALYSIS] AT SER-707</scope>
    <scope>IDENTIFICATION BY MASS SPECTROMETRY</scope>
</reference>
<reference key="15">
    <citation type="journal article" date="2008" name="J. Proteome Res.">
        <title>Phosphoproteome analysis of Drosophila melanogaster embryos.</title>
        <authorList>
            <person name="Zhai B."/>
            <person name="Villen J."/>
            <person name="Beausoleil S.A."/>
            <person name="Mintseris J."/>
            <person name="Gygi S.P."/>
        </authorList>
    </citation>
    <scope>PHOSPHORYLATION [LARGE SCALE ANALYSIS] AT SER-73; SER-76; SER-90; THR-162; THR-808; THR-815; THR-847; THR-855; THR-867 AND THR-868</scope>
    <scope>IDENTIFICATION BY MASS SPECTROMETRY</scope>
    <source>
        <tissue>Embryo</tissue>
    </source>
</reference>
<reference key="16">
    <citation type="journal article" date="2020" name="Mol. Cell">
        <title>Integrator recruits protein phosphatase 2A to prevent pause release and facilitate transcription termination.</title>
        <authorList>
            <person name="Huang K.L."/>
            <person name="Jee D."/>
            <person name="Stein C.B."/>
            <person name="Elrod N.D."/>
            <person name="Henriques T."/>
            <person name="Mascibroda L.G."/>
            <person name="Baillat D."/>
            <person name="Russell W.K."/>
            <person name="Adelman K."/>
            <person name="Wagner E.J."/>
        </authorList>
    </citation>
    <scope>DEPHOSPHORYLATION BY THE INTAC COMPLEX</scope>
</reference>
<name>SPT5H_DROME</name>